<feature type="peptide" id="PRO_0000339273" description="Brain peptide MVPVPVHHMADELLRNGPDTVI" evidence="1">
    <location>
        <begin position="1"/>
        <end position="22"/>
    </location>
</feature>
<feature type="peptide" id="PRO_0000339274" description="Brain peptide VPVPVHHMADELL">
    <location>
        <begin position="2"/>
        <end position="14"/>
    </location>
</feature>
<feature type="peptide" id="PRO_0000339275" description="Brain peptide LRNGPDTVI">
    <location>
        <begin position="14"/>
        <end position="22"/>
    </location>
</feature>
<organism>
    <name type="scientific">Apis mellifera</name>
    <name type="common">Honeybee</name>
    <dbReference type="NCBI Taxonomy" id="7460"/>
    <lineage>
        <taxon>Eukaryota</taxon>
        <taxon>Metazoa</taxon>
        <taxon>Ecdysozoa</taxon>
        <taxon>Arthropoda</taxon>
        <taxon>Hexapoda</taxon>
        <taxon>Insecta</taxon>
        <taxon>Pterygota</taxon>
        <taxon>Neoptera</taxon>
        <taxon>Endopterygota</taxon>
        <taxon>Hymenoptera</taxon>
        <taxon>Apocrita</taxon>
        <taxon>Aculeata</taxon>
        <taxon>Apoidea</taxon>
        <taxon>Anthophila</taxon>
        <taxon>Apidae</taxon>
        <taxon>Apis</taxon>
    </lineage>
</organism>
<evidence type="ECO:0000269" key="1">
    <source>
    </source>
</evidence>
<evidence type="ECO:0000305" key="2"/>
<reference evidence="2" key="1">
    <citation type="journal article" date="2006" name="Science">
        <title>From the genome to the proteome: uncovering peptides in the Apis brain.</title>
        <authorList>
            <person name="Hummon A.B."/>
            <person name="Richmond T.A."/>
            <person name="Verleyen P."/>
            <person name="Baggerman G."/>
            <person name="Huybrechts J."/>
            <person name="Ewing M.A."/>
            <person name="Vierstraete E."/>
            <person name="Rodriguez-Zas S.L."/>
            <person name="Schoofs L."/>
            <person name="Robinson G.E."/>
            <person name="Sweedler J.V."/>
        </authorList>
    </citation>
    <scope>PROTEIN SEQUENCE</scope>
    <scope>MASS SPECTROMETRY</scope>
    <source>
        <tissue evidence="1">Brain</tissue>
    </source>
</reference>
<protein>
    <recommendedName>
        <fullName>Brain peptide MVPVPVHHMADELLRNGPDTVI</fullName>
    </recommendedName>
    <component>
        <recommendedName>
            <fullName>Brain peptide VPVPVHHMADELL</fullName>
        </recommendedName>
    </component>
    <component>
        <recommendedName>
            <fullName>Brain peptide LRNGPDTVI</fullName>
        </recommendedName>
    </component>
</protein>
<dbReference type="PaxDb" id="7460-GB45265-PA"/>
<dbReference type="eggNOG" id="ENOG502S1MX">
    <property type="taxonomic scope" value="Eukaryota"/>
</dbReference>
<dbReference type="InParanoid" id="P85829"/>
<dbReference type="Proteomes" id="UP000005203">
    <property type="component" value="Unplaced"/>
</dbReference>
<name>BP01_APIME</name>
<accession>P85829</accession>
<keyword id="KW-0903">Direct protein sequencing</keyword>
<keyword id="KW-1185">Reference proteome</keyword>
<sequence length="22" mass="2441">MVPVPVHHMADELLRNGPDTVI</sequence>
<proteinExistence type="evidence at protein level"/>
<comment type="mass spectrometry" mass="2439.24" method="Electrospray" evidence="1">
    <molecule>Brain peptide MVPVPVHHMADELLRNGPDTVI</molecule>
</comment>
<comment type="mass spectrometry" mass="2439.24" method="MALDI" evidence="1">
    <molecule>Brain peptide MVPVPVHHMADELLRNGPDTVI</molecule>
</comment>
<comment type="mass spectrometry" mass="1455.75" method="Electrospray" evidence="1">
    <molecule>Brain peptide VPVPVHHMADELL</molecule>
</comment>
<comment type="mass spectrometry" mass="983.54" method="Electrospray" evidence="1">
    <molecule>Brain peptide LRNGPDTVI</molecule>
</comment>